<feature type="chain" id="PRO_0000412761" description="Tetraspanning orphan receptor">
    <location>
        <begin position="1" status="less than"/>
        <end position="287"/>
    </location>
</feature>
<feature type="topological domain" description="Extracellular" evidence="3">
    <location>
        <begin position="1" status="less than"/>
        <end position="27"/>
    </location>
</feature>
<feature type="transmembrane region" description="Helical" evidence="3">
    <location>
        <begin position="28"/>
        <end position="48"/>
    </location>
</feature>
<feature type="topological domain" description="Cytoplasmic" evidence="3">
    <location>
        <begin position="49"/>
        <end position="55"/>
    </location>
</feature>
<feature type="transmembrane region" description="Helical" evidence="3">
    <location>
        <begin position="56"/>
        <end position="76"/>
    </location>
</feature>
<feature type="topological domain" description="Extracellular" evidence="3">
    <location>
        <begin position="77"/>
        <end position="91"/>
    </location>
</feature>
<feature type="transmembrane region" description="Helical" evidence="3">
    <location>
        <begin position="92"/>
        <end position="114"/>
    </location>
</feature>
<feature type="topological domain" description="Cytoplasmic" evidence="3">
    <location>
        <begin position="115"/>
        <end position="287"/>
    </location>
</feature>
<feature type="region of interest" description="Disordered" evidence="4">
    <location>
        <begin position="165"/>
        <end position="190"/>
    </location>
</feature>
<feature type="sequence variant" description="In strain: CL Brenner." evidence="5">
    <original>G</original>
    <variation>S</variation>
    <location>
        <position position="160"/>
    </location>
</feature>
<feature type="sequence variant" description="In strain: Colombiana." evidence="5">
    <original>N</original>
    <variation>D</variation>
    <location>
        <position position="192"/>
    </location>
</feature>
<feature type="sequence variant" description="In strain: Colombiana." evidence="5">
    <original>K</original>
    <variation>R</variation>
    <location>
        <position position="196"/>
    </location>
</feature>
<feature type="non-terminal residue" evidence="9">
    <location>
        <position position="1"/>
    </location>
</feature>
<dbReference type="EMBL" id="AY464185">
    <property type="protein sequence ID" value="AAS46602.1"/>
    <property type="molecule type" value="mRNA"/>
</dbReference>
<dbReference type="EMBL" id="EF212029">
    <property type="protein sequence ID" value="ABN05634.1"/>
    <property type="molecule type" value="Genomic_DNA"/>
</dbReference>
<dbReference type="EMBL" id="EF212030">
    <property type="protein sequence ID" value="ABN05635.1"/>
    <property type="molecule type" value="Genomic_DNA"/>
</dbReference>
<dbReference type="EMBL" id="EF212031">
    <property type="protein sequence ID" value="ABN05636.1"/>
    <property type="molecule type" value="Genomic_DNA"/>
</dbReference>
<dbReference type="GO" id="GO:0005765">
    <property type="term" value="C:lysosomal membrane"/>
    <property type="evidence" value="ECO:0007669"/>
    <property type="project" value="TreeGrafter"/>
</dbReference>
<dbReference type="GO" id="GO:0005886">
    <property type="term" value="C:plasma membrane"/>
    <property type="evidence" value="ECO:0007669"/>
    <property type="project" value="UniProtKB-SubCell"/>
</dbReference>
<dbReference type="InterPro" id="IPR051115">
    <property type="entry name" value="LAPTM_transporter"/>
</dbReference>
<dbReference type="PANTHER" id="PTHR12479">
    <property type="entry name" value="LYSOSOMAL-ASSOCIATED TRANSMEMBRANE PROTEIN"/>
    <property type="match status" value="1"/>
</dbReference>
<dbReference type="PANTHER" id="PTHR12479:SF10">
    <property type="entry name" value="LYSOSOMAL-ASSOCIATED TRANSMEMBRANE PROTEIN"/>
    <property type="match status" value="1"/>
</dbReference>
<evidence type="ECO:0000250" key="1">
    <source>
        <dbReference type="UniProtKB" id="C4QM85"/>
    </source>
</evidence>
<evidence type="ECO:0000250" key="2">
    <source>
        <dbReference type="UniProtKB" id="Q9BLM6"/>
    </source>
</evidence>
<evidence type="ECO:0000255" key="3"/>
<evidence type="ECO:0000256" key="4">
    <source>
        <dbReference type="SAM" id="MobiDB-lite"/>
    </source>
</evidence>
<evidence type="ECO:0000269" key="5">
    <source>
    </source>
</evidence>
<evidence type="ECO:0000269" key="6">
    <source>
    </source>
</evidence>
<evidence type="ECO:0000303" key="7">
    <source>
    </source>
</evidence>
<evidence type="ECO:0000303" key="8">
    <source>
    </source>
</evidence>
<evidence type="ECO:0000305" key="9"/>
<evidence type="ECO:0000312" key="10">
    <source>
        <dbReference type="EMBL" id="AAS46602.1"/>
    </source>
</evidence>
<evidence type="ECO:0000312" key="11">
    <source>
        <dbReference type="EMBL" id="ABN05634.1"/>
    </source>
</evidence>
<evidence type="ECO:0000312" key="12">
    <source>
        <dbReference type="EMBL" id="ABN05635.1"/>
    </source>
</evidence>
<evidence type="ECO:0000312" key="13">
    <source>
        <dbReference type="EMBL" id="ABN05636.1"/>
    </source>
</evidence>
<accession>Q5J7P3</accession>
<accession>A2TKE1</accession>
<accession>A2TKE2</accession>
<proteinExistence type="evidence at transcript level"/>
<gene>
    <name evidence="7" type="primary">TOR</name>
    <name evidence="10" type="synonym">CRIT</name>
</gene>
<sequence length="287" mass="31792">MSPSLVSDTQKHERGSHGVKIKHFSPYIAVCVTTFSLAFCCFMVHGAITRQPTHLLPFFFIQVFDLIICLIHILGFMSSTSDIRLVIHTKTGPIYIKSTGLTFIILSISRMMLAFKAYCLGMVWDCYKYLMLNRRGNLLDDWYSDQWGHLSTFWSLLRTGRNRGNNSIGNSGSPNEPNTRPRPDTITYDPANDLPKYEDILKIPANAYTPPPYYCSNTNGNVNTTTTDAVTTNTTITSATTVNATTTITTNANTNTSTTTSVISPLTTTNKDDTQINNASSNAHSSC</sequence>
<organism>
    <name type="scientific">Trypanosoma cruzi</name>
    <dbReference type="NCBI Taxonomy" id="5693"/>
    <lineage>
        <taxon>Eukaryota</taxon>
        <taxon>Discoba</taxon>
        <taxon>Euglenozoa</taxon>
        <taxon>Kinetoplastea</taxon>
        <taxon>Metakinetoplastina</taxon>
        <taxon>Trypanosomatida</taxon>
        <taxon>Trypanosomatidae</taxon>
        <taxon>Trypanosoma</taxon>
        <taxon>Schizotrypanum</taxon>
    </lineage>
</organism>
<name>TOR_TRYCR</name>
<comment type="function">
    <text evidence="5 6">Cell surface receptor that binds to human complement C2a protein. This results in inhibition of the classical and lectin pathways of complement activation, probably due to interference with binding of C2a to C4b and interference with cleavage by C1 or MASP2 such that C3 convertase cannot be formed. This infers resistance to complement-mediated cell lysis, allowing parasite survival and infection.</text>
</comment>
<comment type="subunit">
    <text evidence="2">Interacts (via N-terminal extracellular domain) with human C2a.</text>
</comment>
<comment type="subcellular location">
    <subcellularLocation>
        <location evidence="6">Cell membrane</location>
        <topology evidence="6">Multi-pass membrane protein</topology>
    </subcellularLocation>
    <text evidence="6">Located on the surface tegumental plasma membrane of metacyclic trypomastigote so in contact with host blood plasma.</text>
</comment>
<comment type="developmental stage">
    <text evidence="5">In Y strain, expression is seen in metacyclic trypomastigote form and in stationary, but not logarithmic-phase epimastigote forms. In Colombiana strain, expression is seen in metacyclic trypomastigote form only.</text>
</comment>
<comment type="miscellaneous">
    <text evidence="5 7">The C-sensitive epimastigote form of the Colombiana strain is more susceptible to lysis than the Y strain at all human serum concentrations. Potential vaccine candidate molecule.</text>
</comment>
<keyword id="KW-1003">Cell membrane</keyword>
<keyword id="KW-0472">Membrane</keyword>
<keyword id="KW-0675">Receptor</keyword>
<keyword id="KW-0812">Transmembrane</keyword>
<keyword id="KW-1133">Transmembrane helix</keyword>
<protein>
    <recommendedName>
        <fullName evidence="1">Tetraspanning orphan receptor</fullName>
    </recommendedName>
    <alternativeName>
        <fullName evidence="1">Complement C2 receptor inhibitor tetraspanning</fullName>
    </alternativeName>
    <alternativeName>
        <fullName evidence="8">Complement C2 receptor inhibitor trispanning</fullName>
    </alternativeName>
    <alternativeName>
        <fullName evidence="10">Complement inhibitory receptor</fullName>
    </alternativeName>
    <alternativeName>
        <fullName evidence="7">Trispanning orphan receptor</fullName>
        <shortName evidence="7">Tc-TOR</shortName>
    </alternativeName>
</protein>
<reference evidence="9" key="1">
    <citation type="journal article" date="1999" name="Biochim. Biophys. Acta">
        <title>Schistosoma TOR (trispanning orphan receptor), a novel, antigenic surface receptor of the blood-dwelling, Schistosoma parasite.</title>
        <authorList>
            <person name="Inal J.M."/>
        </authorList>
    </citation>
    <scope>NUCLEOTIDE SEQUENCE [GENOMIC DNA]</scope>
</reference>
<reference evidence="10" key="2">
    <citation type="journal article" date="2005" name="J. Immunol.">
        <title>Complement C2 receptor inhibitor trispanning: a novel human complement inhibitory receptor.</title>
        <authorList>
            <person name="Inal J.M."/>
            <person name="Hui K.M."/>
            <person name="Miot S."/>
            <person name="Lange S."/>
            <person name="Ramirez M.I."/>
            <person name="Schneider B."/>
            <person name="Krueger G."/>
            <person name="Schifferli J.A."/>
        </authorList>
    </citation>
    <scope>NUCLEOTIDE SEQUENCE [MRNA]</scope>
</reference>
<reference evidence="9 11" key="3">
    <citation type="journal article" date="2008" name="J. Infect. Dis.">
        <title>Complement C2 receptor inhibitor trispanning confers an increased ability to resist complement-mediated lysis in Trypanosoma cruzi.</title>
        <authorList>
            <person name="Cestari Idos S."/>
            <person name="Evans-Osses I."/>
            <person name="Freitas J.C."/>
            <person name="Inal J.M."/>
            <person name="Ramirez M.I."/>
        </authorList>
    </citation>
    <scope>NUCLEOTIDE SEQUENCE [GENOMIC DNA]</scope>
    <scope>FUNCTION</scope>
    <scope>DEVELOPMENTAL STAGE</scope>
    <scope>VARIANTS SER-160; ASP-192 AND ARG-196</scope>
    <source>
        <strain evidence="12">CL Brenner</strain>
        <strain evidence="13">Colombiana</strain>
        <strain evidence="11">DM28c</strain>
    </source>
</reference>
<reference evidence="9" key="4">
    <citation type="journal article" date="2009" name="Mol. Immunol.">
        <title>Role of early lectin pathway activation in the complement-mediated killing of Trypanosoma cruzi.</title>
        <authorList>
            <person name="Cestari Idos S."/>
            <person name="Krarup A."/>
            <person name="Sim R.B."/>
            <person name="Inal J.M."/>
            <person name="Ramirez M.I."/>
        </authorList>
    </citation>
    <scope>FUNCTION</scope>
    <scope>SUBCELLULAR LOCATION</scope>
</reference>